<sequence length="440" mass="48961">MSTPTPKVGFVSLGCPKALVDSERILTQLRMEGYEVVPTYEDADVVVVNTCGFIDSAKAESLEVIGEAIAENGKVIVTGCMGVEEHAIRDVHPSVLAVTGPQQYEQVVTAVHEVVPPKTEHNPLVDLVPPQGVKLTPRHYAYLKISEGCNHSCSFCIIPSMRGKLVSRPVGDVLSEAERLVKAGVKELLVISQDTSAYGVDLKYKTDFWNGQPVKTRMKELCEALSSMGVWVRLHYVYPYPNVDDVIPLMAAGKLLPYLDIPFQHASPKVLKAMKRPAFEDKTLARIKQWREICPELTIRSTFIVGFPGETEEDFQYLLDWLTEAQLDRVGCFQYSPVEGAPANELGLEPVPDEVKQDRWERFMAHQQAISAARLQLKVGKEIEVLIDEVDEQGAVGRSWADAPEIDGNVFVDSDELKPGDKVRVRITDADEYDLWAELV</sequence>
<evidence type="ECO:0000255" key="1">
    <source>
        <dbReference type="HAMAP-Rule" id="MF_01865"/>
    </source>
</evidence>
<evidence type="ECO:0000255" key="2">
    <source>
        <dbReference type="PROSITE-ProRule" id="PRU01266"/>
    </source>
</evidence>
<proteinExistence type="inferred from homology"/>
<reference key="1">
    <citation type="journal article" date="2000" name="Nature">
        <title>Complete genome sequence of Pseudomonas aeruginosa PAO1, an opportunistic pathogen.</title>
        <authorList>
            <person name="Stover C.K."/>
            <person name="Pham X.-Q.T."/>
            <person name="Erwin A.L."/>
            <person name="Mizoguchi S.D."/>
            <person name="Warrener P."/>
            <person name="Hickey M.J."/>
            <person name="Brinkman F.S.L."/>
            <person name="Hufnagle W.O."/>
            <person name="Kowalik D.J."/>
            <person name="Lagrou M."/>
            <person name="Garber R.L."/>
            <person name="Goltry L."/>
            <person name="Tolentino E."/>
            <person name="Westbrock-Wadman S."/>
            <person name="Yuan Y."/>
            <person name="Brody L.L."/>
            <person name="Coulter S.N."/>
            <person name="Folger K.R."/>
            <person name="Kas A."/>
            <person name="Larbig K."/>
            <person name="Lim R.M."/>
            <person name="Smith K.A."/>
            <person name="Spencer D.H."/>
            <person name="Wong G.K.-S."/>
            <person name="Wu Z."/>
            <person name="Paulsen I.T."/>
            <person name="Reizer J."/>
            <person name="Saier M.H. Jr."/>
            <person name="Hancock R.E.W."/>
            <person name="Lory S."/>
            <person name="Olson M.V."/>
        </authorList>
    </citation>
    <scope>NUCLEOTIDE SEQUENCE [LARGE SCALE GENOMIC DNA]</scope>
    <source>
        <strain>ATCC 15692 / DSM 22644 / CIP 104116 / JCM 14847 / LMG 12228 / 1C / PRS 101 / PAO1</strain>
    </source>
</reference>
<comment type="function">
    <text evidence="1">Catalyzes the methylthiolation of an aspartic acid residue of ribosomal protein uS12.</text>
</comment>
<comment type="catalytic activity">
    <reaction evidence="1">
        <text>L-aspartate(89)-[ribosomal protein uS12]-hydrogen + (sulfur carrier)-SH + AH2 + 2 S-adenosyl-L-methionine = 3-methylsulfanyl-L-aspartate(89)-[ribosomal protein uS12]-hydrogen + (sulfur carrier)-H + 5'-deoxyadenosine + L-methionine + A + S-adenosyl-L-homocysteine + 2 H(+)</text>
        <dbReference type="Rhea" id="RHEA:37087"/>
        <dbReference type="Rhea" id="RHEA-COMP:10460"/>
        <dbReference type="Rhea" id="RHEA-COMP:10461"/>
        <dbReference type="Rhea" id="RHEA-COMP:14737"/>
        <dbReference type="Rhea" id="RHEA-COMP:14739"/>
        <dbReference type="ChEBI" id="CHEBI:13193"/>
        <dbReference type="ChEBI" id="CHEBI:15378"/>
        <dbReference type="ChEBI" id="CHEBI:17319"/>
        <dbReference type="ChEBI" id="CHEBI:17499"/>
        <dbReference type="ChEBI" id="CHEBI:29917"/>
        <dbReference type="ChEBI" id="CHEBI:29961"/>
        <dbReference type="ChEBI" id="CHEBI:57844"/>
        <dbReference type="ChEBI" id="CHEBI:57856"/>
        <dbReference type="ChEBI" id="CHEBI:59789"/>
        <dbReference type="ChEBI" id="CHEBI:64428"/>
        <dbReference type="ChEBI" id="CHEBI:73599"/>
        <dbReference type="EC" id="2.8.4.4"/>
    </reaction>
</comment>
<comment type="cofactor">
    <cofactor evidence="1">
        <name>[4Fe-4S] cluster</name>
        <dbReference type="ChEBI" id="CHEBI:49883"/>
    </cofactor>
    <text evidence="1">Binds 2 [4Fe-4S] clusters. One cluster is coordinated with 3 cysteines and an exchangeable S-adenosyl-L-methionine.</text>
</comment>
<comment type="subcellular location">
    <subcellularLocation>
        <location evidence="1">Cytoplasm</location>
    </subcellularLocation>
</comment>
<comment type="similarity">
    <text evidence="1">Belongs to the methylthiotransferase family. RimO subfamily.</text>
</comment>
<dbReference type="EC" id="2.8.4.4" evidence="1"/>
<dbReference type="EMBL" id="AE004091">
    <property type="protein sequence ID" value="AAG04305.1"/>
    <property type="molecule type" value="Genomic_DNA"/>
</dbReference>
<dbReference type="PIR" id="G83532">
    <property type="entry name" value="G83532"/>
</dbReference>
<dbReference type="RefSeq" id="NP_249607.1">
    <property type="nucleotide sequence ID" value="NC_002516.2"/>
</dbReference>
<dbReference type="RefSeq" id="WP_003086001.1">
    <property type="nucleotide sequence ID" value="NZ_QZGE01000007.1"/>
</dbReference>
<dbReference type="SMR" id="Q9I541"/>
<dbReference type="FunCoup" id="Q9I541">
    <property type="interactions" value="417"/>
</dbReference>
<dbReference type="STRING" id="208964.PA0916"/>
<dbReference type="PaxDb" id="208964-PA0916"/>
<dbReference type="GeneID" id="880629"/>
<dbReference type="KEGG" id="pae:PA0916"/>
<dbReference type="PATRIC" id="fig|208964.12.peg.951"/>
<dbReference type="PseudoCAP" id="PA0916"/>
<dbReference type="HOGENOM" id="CLU_018697_0_0_6"/>
<dbReference type="InParanoid" id="Q9I541"/>
<dbReference type="OrthoDB" id="9805215at2"/>
<dbReference type="PhylomeDB" id="Q9I541"/>
<dbReference type="BioCyc" id="PAER208964:G1FZ6-935-MONOMER"/>
<dbReference type="Proteomes" id="UP000002438">
    <property type="component" value="Chromosome"/>
</dbReference>
<dbReference type="GO" id="GO:0005829">
    <property type="term" value="C:cytosol"/>
    <property type="evidence" value="ECO:0000318"/>
    <property type="project" value="GO_Central"/>
</dbReference>
<dbReference type="GO" id="GO:0051539">
    <property type="term" value="F:4 iron, 4 sulfur cluster binding"/>
    <property type="evidence" value="ECO:0000318"/>
    <property type="project" value="GO_Central"/>
</dbReference>
<dbReference type="GO" id="GO:0035599">
    <property type="term" value="F:aspartic acid methylthiotransferase activity"/>
    <property type="evidence" value="ECO:0000318"/>
    <property type="project" value="GO_Central"/>
</dbReference>
<dbReference type="GO" id="GO:0046872">
    <property type="term" value="F:metal ion binding"/>
    <property type="evidence" value="ECO:0007669"/>
    <property type="project" value="UniProtKB-KW"/>
</dbReference>
<dbReference type="GO" id="GO:0103039">
    <property type="term" value="F:protein methylthiotransferase activity"/>
    <property type="evidence" value="ECO:0007669"/>
    <property type="project" value="UniProtKB-EC"/>
</dbReference>
<dbReference type="GO" id="GO:0006400">
    <property type="term" value="P:tRNA modification"/>
    <property type="evidence" value="ECO:0007669"/>
    <property type="project" value="InterPro"/>
</dbReference>
<dbReference type="CDD" id="cd01335">
    <property type="entry name" value="Radical_SAM"/>
    <property type="match status" value="1"/>
</dbReference>
<dbReference type="FunFam" id="2.40.50.140:FF:000060">
    <property type="entry name" value="Ribosomal protein S12 methylthiotransferase RimO"/>
    <property type="match status" value="1"/>
</dbReference>
<dbReference type="FunFam" id="3.40.50.12160:FF:000002">
    <property type="entry name" value="Ribosomal protein S12 methylthiotransferase RimO"/>
    <property type="match status" value="1"/>
</dbReference>
<dbReference type="FunFam" id="3.80.30.20:FF:000001">
    <property type="entry name" value="tRNA-2-methylthio-N(6)-dimethylallyladenosine synthase 2"/>
    <property type="match status" value="1"/>
</dbReference>
<dbReference type="Gene3D" id="3.40.50.12160">
    <property type="entry name" value="Methylthiotransferase, N-terminal domain"/>
    <property type="match status" value="1"/>
</dbReference>
<dbReference type="Gene3D" id="2.40.50.140">
    <property type="entry name" value="Nucleic acid-binding proteins"/>
    <property type="match status" value="1"/>
</dbReference>
<dbReference type="Gene3D" id="3.80.30.20">
    <property type="entry name" value="tm_1862 like domain"/>
    <property type="match status" value="1"/>
</dbReference>
<dbReference type="HAMAP" id="MF_01865">
    <property type="entry name" value="MTTase_RimO"/>
    <property type="match status" value="1"/>
</dbReference>
<dbReference type="InterPro" id="IPR006638">
    <property type="entry name" value="Elp3/MiaA/NifB-like_rSAM"/>
</dbReference>
<dbReference type="InterPro" id="IPR005839">
    <property type="entry name" value="Methylthiotransferase"/>
</dbReference>
<dbReference type="InterPro" id="IPR020612">
    <property type="entry name" value="Methylthiotransferase_CS"/>
</dbReference>
<dbReference type="InterPro" id="IPR013848">
    <property type="entry name" value="Methylthiotransferase_N"/>
</dbReference>
<dbReference type="InterPro" id="IPR038135">
    <property type="entry name" value="Methylthiotransferase_N_sf"/>
</dbReference>
<dbReference type="InterPro" id="IPR012340">
    <property type="entry name" value="NA-bd_OB-fold"/>
</dbReference>
<dbReference type="InterPro" id="IPR005840">
    <property type="entry name" value="Ribosomal_uS12_MeSTrfase_RimO"/>
</dbReference>
<dbReference type="InterPro" id="IPR007197">
    <property type="entry name" value="rSAM"/>
</dbReference>
<dbReference type="InterPro" id="IPR023404">
    <property type="entry name" value="rSAM_horseshoe"/>
</dbReference>
<dbReference type="InterPro" id="IPR002792">
    <property type="entry name" value="TRAM_dom"/>
</dbReference>
<dbReference type="NCBIfam" id="TIGR01125">
    <property type="entry name" value="30S ribosomal protein S12 methylthiotransferase RimO"/>
    <property type="match status" value="1"/>
</dbReference>
<dbReference type="NCBIfam" id="TIGR00089">
    <property type="entry name" value="MiaB/RimO family radical SAM methylthiotransferase"/>
    <property type="match status" value="1"/>
</dbReference>
<dbReference type="PANTHER" id="PTHR43837">
    <property type="entry name" value="RIBOSOMAL PROTEIN S12 METHYLTHIOTRANSFERASE RIMO"/>
    <property type="match status" value="1"/>
</dbReference>
<dbReference type="PANTHER" id="PTHR43837:SF1">
    <property type="entry name" value="RIBOSOMAL PROTEIN US12 METHYLTHIOTRANSFERASE RIMO"/>
    <property type="match status" value="1"/>
</dbReference>
<dbReference type="Pfam" id="PF04055">
    <property type="entry name" value="Radical_SAM"/>
    <property type="match status" value="1"/>
</dbReference>
<dbReference type="Pfam" id="PF18693">
    <property type="entry name" value="TRAM_2"/>
    <property type="match status" value="1"/>
</dbReference>
<dbReference type="Pfam" id="PF00919">
    <property type="entry name" value="UPF0004"/>
    <property type="match status" value="1"/>
</dbReference>
<dbReference type="SFLD" id="SFLDG01082">
    <property type="entry name" value="B12-binding_domain_containing"/>
    <property type="match status" value="1"/>
</dbReference>
<dbReference type="SFLD" id="SFLDG01061">
    <property type="entry name" value="methylthiotransferase"/>
    <property type="match status" value="1"/>
</dbReference>
<dbReference type="SFLD" id="SFLDF00274">
    <property type="entry name" value="ribosomal_protein_S12_methylth"/>
    <property type="match status" value="1"/>
</dbReference>
<dbReference type="SMART" id="SM00729">
    <property type="entry name" value="Elp3"/>
    <property type="match status" value="1"/>
</dbReference>
<dbReference type="SUPFAM" id="SSF102114">
    <property type="entry name" value="Radical SAM enzymes"/>
    <property type="match status" value="1"/>
</dbReference>
<dbReference type="PROSITE" id="PS51449">
    <property type="entry name" value="MTTASE_N"/>
    <property type="match status" value="1"/>
</dbReference>
<dbReference type="PROSITE" id="PS01278">
    <property type="entry name" value="MTTASE_RADICAL"/>
    <property type="match status" value="1"/>
</dbReference>
<dbReference type="PROSITE" id="PS51918">
    <property type="entry name" value="RADICAL_SAM"/>
    <property type="match status" value="1"/>
</dbReference>
<dbReference type="PROSITE" id="PS50926">
    <property type="entry name" value="TRAM"/>
    <property type="match status" value="1"/>
</dbReference>
<accession>Q9I541</accession>
<name>RIMO_PSEAE</name>
<keyword id="KW-0004">4Fe-4S</keyword>
<keyword id="KW-0963">Cytoplasm</keyword>
<keyword id="KW-0408">Iron</keyword>
<keyword id="KW-0411">Iron-sulfur</keyword>
<keyword id="KW-0479">Metal-binding</keyword>
<keyword id="KW-1185">Reference proteome</keyword>
<keyword id="KW-0949">S-adenosyl-L-methionine</keyword>
<keyword id="KW-0808">Transferase</keyword>
<organism>
    <name type="scientific">Pseudomonas aeruginosa (strain ATCC 15692 / DSM 22644 / CIP 104116 / JCM 14847 / LMG 12228 / 1C / PRS 101 / PAO1)</name>
    <dbReference type="NCBI Taxonomy" id="208964"/>
    <lineage>
        <taxon>Bacteria</taxon>
        <taxon>Pseudomonadati</taxon>
        <taxon>Pseudomonadota</taxon>
        <taxon>Gammaproteobacteria</taxon>
        <taxon>Pseudomonadales</taxon>
        <taxon>Pseudomonadaceae</taxon>
        <taxon>Pseudomonas</taxon>
    </lineage>
</organism>
<feature type="chain" id="PRO_0000374941" description="Ribosomal protein uS12 methylthiotransferase RimO">
    <location>
        <begin position="1"/>
        <end position="440"/>
    </location>
</feature>
<feature type="domain" description="MTTase N-terminal" evidence="1">
    <location>
        <begin position="6"/>
        <end position="116"/>
    </location>
</feature>
<feature type="domain" description="Radical SAM core" evidence="2">
    <location>
        <begin position="135"/>
        <end position="373"/>
    </location>
</feature>
<feature type="domain" description="TRAM" evidence="1">
    <location>
        <begin position="376"/>
        <end position="440"/>
    </location>
</feature>
<feature type="binding site" evidence="1">
    <location>
        <position position="15"/>
    </location>
    <ligand>
        <name>[4Fe-4S] cluster</name>
        <dbReference type="ChEBI" id="CHEBI:49883"/>
        <label>1</label>
    </ligand>
</feature>
<feature type="binding site" evidence="1">
    <location>
        <position position="51"/>
    </location>
    <ligand>
        <name>[4Fe-4S] cluster</name>
        <dbReference type="ChEBI" id="CHEBI:49883"/>
        <label>1</label>
    </ligand>
</feature>
<feature type="binding site" evidence="1">
    <location>
        <position position="80"/>
    </location>
    <ligand>
        <name>[4Fe-4S] cluster</name>
        <dbReference type="ChEBI" id="CHEBI:49883"/>
        <label>1</label>
    </ligand>
</feature>
<feature type="binding site" evidence="1">
    <location>
        <position position="149"/>
    </location>
    <ligand>
        <name>[4Fe-4S] cluster</name>
        <dbReference type="ChEBI" id="CHEBI:49883"/>
        <label>2</label>
        <note>4Fe-4S-S-AdoMet</note>
    </ligand>
</feature>
<feature type="binding site" evidence="1">
    <location>
        <position position="153"/>
    </location>
    <ligand>
        <name>[4Fe-4S] cluster</name>
        <dbReference type="ChEBI" id="CHEBI:49883"/>
        <label>2</label>
        <note>4Fe-4S-S-AdoMet</note>
    </ligand>
</feature>
<feature type="binding site" evidence="1">
    <location>
        <position position="156"/>
    </location>
    <ligand>
        <name>[4Fe-4S] cluster</name>
        <dbReference type="ChEBI" id="CHEBI:49883"/>
        <label>2</label>
        <note>4Fe-4S-S-AdoMet</note>
    </ligand>
</feature>
<protein>
    <recommendedName>
        <fullName evidence="1">Ribosomal protein uS12 methylthiotransferase RimO</fullName>
        <shortName evidence="1">uS12 MTTase</shortName>
        <shortName evidence="1">uS12 methylthiotransferase</shortName>
        <ecNumber evidence="1">2.8.4.4</ecNumber>
    </recommendedName>
    <alternativeName>
        <fullName evidence="1">Ribosomal protein uS12 (aspartate-C(3))-methylthiotransferase</fullName>
    </alternativeName>
    <alternativeName>
        <fullName evidence="1">Ribosome maturation factor RimO</fullName>
    </alternativeName>
</protein>
<gene>
    <name evidence="1" type="primary">rimO</name>
    <name type="ordered locus">PA0916</name>
</gene>